<feature type="signal peptide" evidence="3">
    <location>
        <begin position="1"/>
        <end position="17"/>
    </location>
</feature>
<feature type="propeptide" id="PRO_0000026317" description="Activation peptide">
    <location>
        <begin position="18"/>
        <end position="112"/>
    </location>
</feature>
<feature type="chain" id="PRO_0000026318" description="Cathepsin S">
    <location>
        <begin position="113"/>
        <end position="330"/>
    </location>
</feature>
<feature type="active site" evidence="1">
    <location>
        <position position="137"/>
    </location>
</feature>
<feature type="active site" evidence="1">
    <location>
        <position position="277"/>
    </location>
</feature>
<feature type="active site" evidence="1">
    <location>
        <position position="297"/>
    </location>
</feature>
<feature type="glycosylation site" description="N-linked (GlcNAc...) asparagine" evidence="3">
    <location>
        <position position="100"/>
    </location>
</feature>
<feature type="glycosylation site" description="N-linked (GlcNAc...) asparagine" evidence="3">
    <location>
        <position position="110"/>
    </location>
</feature>
<feature type="disulfide bond" evidence="1">
    <location>
        <begin position="124"/>
        <end position="222"/>
    </location>
</feature>
<feature type="disulfide bond" evidence="1">
    <location>
        <begin position="134"/>
        <end position="179"/>
    </location>
</feature>
<feature type="disulfide bond" evidence="1">
    <location>
        <begin position="168"/>
        <end position="211"/>
    </location>
</feature>
<feature type="disulfide bond" evidence="1">
    <location>
        <begin position="271"/>
        <end position="319"/>
    </location>
</feature>
<evidence type="ECO:0000250" key="1"/>
<evidence type="ECO:0000250" key="2">
    <source>
        <dbReference type="UniProtKB" id="P25774"/>
    </source>
</evidence>
<evidence type="ECO:0000255" key="3"/>
<evidence type="ECO:0000255" key="4">
    <source>
        <dbReference type="PROSITE-ProRule" id="PRU10088"/>
    </source>
</evidence>
<evidence type="ECO:0000255" key="5">
    <source>
        <dbReference type="PROSITE-ProRule" id="PRU10089"/>
    </source>
</evidence>
<evidence type="ECO:0000255" key="6">
    <source>
        <dbReference type="PROSITE-ProRule" id="PRU10090"/>
    </source>
</evidence>
<dbReference type="EC" id="3.4.22.27"/>
<dbReference type="EMBL" id="L03201">
    <property type="protein sequence ID" value="AAA40994.1"/>
    <property type="molecule type" value="mRNA"/>
</dbReference>
<dbReference type="PIR" id="A45087">
    <property type="entry name" value="A45087"/>
</dbReference>
<dbReference type="RefSeq" id="NP_059016.1">
    <property type="nucleotide sequence ID" value="NM_017320.1"/>
</dbReference>
<dbReference type="SMR" id="Q02765"/>
<dbReference type="FunCoup" id="Q02765">
    <property type="interactions" value="526"/>
</dbReference>
<dbReference type="STRING" id="10116.ENSRNOP00000028732"/>
<dbReference type="ChEMBL" id="CHEMBL1075217"/>
<dbReference type="GuidetoPHARMACOLOGY" id="2353"/>
<dbReference type="MEROPS" id="C01.034"/>
<dbReference type="MEROPS" id="I29.004"/>
<dbReference type="GlyCosmos" id="Q02765">
    <property type="glycosylation" value="2 sites, No reported glycans"/>
</dbReference>
<dbReference type="GlyGen" id="Q02765">
    <property type="glycosylation" value="2 sites"/>
</dbReference>
<dbReference type="PhosphoSitePlus" id="Q02765"/>
<dbReference type="GeneID" id="50654"/>
<dbReference type="KEGG" id="rno:50654"/>
<dbReference type="UCSC" id="RGD:621513">
    <property type="organism name" value="rat"/>
</dbReference>
<dbReference type="AGR" id="RGD:621513"/>
<dbReference type="CTD" id="1520"/>
<dbReference type="RGD" id="621513">
    <property type="gene designation" value="Ctss"/>
</dbReference>
<dbReference type="InParanoid" id="Q02765"/>
<dbReference type="PhylomeDB" id="Q02765"/>
<dbReference type="BRENDA" id="3.4.22.27">
    <property type="organism ID" value="5301"/>
</dbReference>
<dbReference type="Reactome" id="R-RNO-1474228">
    <property type="pathway name" value="Degradation of the extracellular matrix"/>
</dbReference>
<dbReference type="Reactome" id="R-RNO-1679131">
    <property type="pathway name" value="Trafficking and processing of endosomal TLR"/>
</dbReference>
<dbReference type="Reactome" id="R-RNO-2022090">
    <property type="pathway name" value="Assembly of collagen fibrils and other multimeric structures"/>
</dbReference>
<dbReference type="Reactome" id="R-RNO-2132295">
    <property type="pathway name" value="MHC class II antigen presentation"/>
</dbReference>
<dbReference type="Reactome" id="R-RNO-6798695">
    <property type="pathway name" value="Neutrophil degranulation"/>
</dbReference>
<dbReference type="PRO" id="PR:Q02765"/>
<dbReference type="Proteomes" id="UP000002494">
    <property type="component" value="Unplaced"/>
</dbReference>
<dbReference type="GO" id="GO:0009986">
    <property type="term" value="C:cell surface"/>
    <property type="evidence" value="ECO:0000314"/>
    <property type="project" value="RGD"/>
</dbReference>
<dbReference type="GO" id="GO:0005576">
    <property type="term" value="C:extracellular region"/>
    <property type="evidence" value="ECO:0000304"/>
    <property type="project" value="Reactome"/>
</dbReference>
<dbReference type="GO" id="GO:0005615">
    <property type="term" value="C:extracellular space"/>
    <property type="evidence" value="ECO:0000250"/>
    <property type="project" value="UniProtKB"/>
</dbReference>
<dbReference type="GO" id="GO:0005770">
    <property type="term" value="C:late endosome"/>
    <property type="evidence" value="ECO:0000266"/>
    <property type="project" value="RGD"/>
</dbReference>
<dbReference type="GO" id="GO:0005764">
    <property type="term" value="C:lysosome"/>
    <property type="evidence" value="ECO:0000266"/>
    <property type="project" value="RGD"/>
</dbReference>
<dbReference type="GO" id="GO:0016020">
    <property type="term" value="C:membrane"/>
    <property type="evidence" value="ECO:0000266"/>
    <property type="project" value="RGD"/>
</dbReference>
<dbReference type="GO" id="GO:0045335">
    <property type="term" value="C:phagocytic vesicle"/>
    <property type="evidence" value="ECO:0000250"/>
    <property type="project" value="UniProtKB"/>
</dbReference>
<dbReference type="GO" id="GO:0005518">
    <property type="term" value="F:collagen binding"/>
    <property type="evidence" value="ECO:0000266"/>
    <property type="project" value="RGD"/>
</dbReference>
<dbReference type="GO" id="GO:0004197">
    <property type="term" value="F:cysteine-type endopeptidase activity"/>
    <property type="evidence" value="ECO:0000266"/>
    <property type="project" value="RGD"/>
</dbReference>
<dbReference type="GO" id="GO:0008234">
    <property type="term" value="F:cysteine-type peptidase activity"/>
    <property type="evidence" value="ECO:0000314"/>
    <property type="project" value="RGD"/>
</dbReference>
<dbReference type="GO" id="GO:0001968">
    <property type="term" value="F:fibronectin binding"/>
    <property type="evidence" value="ECO:0000266"/>
    <property type="project" value="RGD"/>
</dbReference>
<dbReference type="GO" id="GO:0043236">
    <property type="term" value="F:laminin binding"/>
    <property type="evidence" value="ECO:0000266"/>
    <property type="project" value="RGD"/>
</dbReference>
<dbReference type="GO" id="GO:0008233">
    <property type="term" value="F:peptidase activity"/>
    <property type="evidence" value="ECO:0000266"/>
    <property type="project" value="RGD"/>
</dbReference>
<dbReference type="GO" id="GO:0043394">
    <property type="term" value="F:proteoglycan binding"/>
    <property type="evidence" value="ECO:0000266"/>
    <property type="project" value="RGD"/>
</dbReference>
<dbReference type="GO" id="GO:0004252">
    <property type="term" value="F:serine-type endopeptidase activity"/>
    <property type="evidence" value="ECO:0000304"/>
    <property type="project" value="Reactome"/>
</dbReference>
<dbReference type="GO" id="GO:0002250">
    <property type="term" value="P:adaptive immune response"/>
    <property type="evidence" value="ECO:0000266"/>
    <property type="project" value="RGD"/>
</dbReference>
<dbReference type="GO" id="GO:0019886">
    <property type="term" value="P:antigen processing and presentation of exogenous peptide antigen via MHC class II"/>
    <property type="evidence" value="ECO:0000250"/>
    <property type="project" value="UniProtKB"/>
</dbReference>
<dbReference type="GO" id="GO:0048002">
    <property type="term" value="P:antigen processing and presentation of peptide antigen"/>
    <property type="evidence" value="ECO:0000266"/>
    <property type="project" value="RGD"/>
</dbReference>
<dbReference type="GO" id="GO:0034769">
    <property type="term" value="P:basement membrane disassembly"/>
    <property type="evidence" value="ECO:0000266"/>
    <property type="project" value="RGD"/>
</dbReference>
<dbReference type="GO" id="GO:0045453">
    <property type="term" value="P:bone resorption"/>
    <property type="evidence" value="ECO:0000315"/>
    <property type="project" value="RGD"/>
</dbReference>
<dbReference type="GO" id="GO:0097067">
    <property type="term" value="P:cellular response to thyroid hormone stimulus"/>
    <property type="evidence" value="ECO:0000266"/>
    <property type="project" value="RGD"/>
</dbReference>
<dbReference type="GO" id="GO:0030574">
    <property type="term" value="P:collagen catabolic process"/>
    <property type="evidence" value="ECO:0000266"/>
    <property type="project" value="RGD"/>
</dbReference>
<dbReference type="GO" id="GO:0001656">
    <property type="term" value="P:metanephros development"/>
    <property type="evidence" value="ECO:0000270"/>
    <property type="project" value="UniProtKB"/>
</dbReference>
<dbReference type="GO" id="GO:0050729">
    <property type="term" value="P:positive regulation of inflammatory response"/>
    <property type="evidence" value="ECO:0000266"/>
    <property type="project" value="RGD"/>
</dbReference>
<dbReference type="GO" id="GO:0016485">
    <property type="term" value="P:protein processing"/>
    <property type="evidence" value="ECO:0000266"/>
    <property type="project" value="RGD"/>
</dbReference>
<dbReference type="GO" id="GO:0006508">
    <property type="term" value="P:proteolysis"/>
    <property type="evidence" value="ECO:0000266"/>
    <property type="project" value="RGD"/>
</dbReference>
<dbReference type="GO" id="GO:0051603">
    <property type="term" value="P:proteolysis involved in protein catabolic process"/>
    <property type="evidence" value="ECO:0000266"/>
    <property type="project" value="RGD"/>
</dbReference>
<dbReference type="GO" id="GO:0002577">
    <property type="term" value="P:regulation of antigen processing and presentation"/>
    <property type="evidence" value="ECO:0000266"/>
    <property type="project" value="RGD"/>
</dbReference>
<dbReference type="GO" id="GO:0010447">
    <property type="term" value="P:response to acidic pH"/>
    <property type="evidence" value="ECO:0000266"/>
    <property type="project" value="RGD"/>
</dbReference>
<dbReference type="CDD" id="cd02248">
    <property type="entry name" value="Peptidase_C1A"/>
    <property type="match status" value="1"/>
</dbReference>
<dbReference type="FunFam" id="3.90.70.10:FF:000006">
    <property type="entry name" value="Cathepsin S"/>
    <property type="match status" value="1"/>
</dbReference>
<dbReference type="Gene3D" id="3.90.70.10">
    <property type="entry name" value="Cysteine proteinases"/>
    <property type="match status" value="1"/>
</dbReference>
<dbReference type="InterPro" id="IPR038765">
    <property type="entry name" value="Papain-like_cys_pep_sf"/>
</dbReference>
<dbReference type="InterPro" id="IPR025661">
    <property type="entry name" value="Pept_asp_AS"/>
</dbReference>
<dbReference type="InterPro" id="IPR000169">
    <property type="entry name" value="Pept_cys_AS"/>
</dbReference>
<dbReference type="InterPro" id="IPR025660">
    <property type="entry name" value="Pept_his_AS"/>
</dbReference>
<dbReference type="InterPro" id="IPR013128">
    <property type="entry name" value="Peptidase_C1A"/>
</dbReference>
<dbReference type="InterPro" id="IPR000668">
    <property type="entry name" value="Peptidase_C1A_C"/>
</dbReference>
<dbReference type="InterPro" id="IPR039417">
    <property type="entry name" value="Peptidase_C1A_papain-like"/>
</dbReference>
<dbReference type="InterPro" id="IPR013201">
    <property type="entry name" value="Prot_inhib_I29"/>
</dbReference>
<dbReference type="PANTHER" id="PTHR12411">
    <property type="entry name" value="CYSTEINE PROTEASE FAMILY C1-RELATED"/>
    <property type="match status" value="1"/>
</dbReference>
<dbReference type="Pfam" id="PF08246">
    <property type="entry name" value="Inhibitor_I29"/>
    <property type="match status" value="1"/>
</dbReference>
<dbReference type="Pfam" id="PF00112">
    <property type="entry name" value="Peptidase_C1"/>
    <property type="match status" value="1"/>
</dbReference>
<dbReference type="PRINTS" id="PR00705">
    <property type="entry name" value="PAPAIN"/>
</dbReference>
<dbReference type="SMART" id="SM00848">
    <property type="entry name" value="Inhibitor_I29"/>
    <property type="match status" value="1"/>
</dbReference>
<dbReference type="SMART" id="SM00645">
    <property type="entry name" value="Pept_C1"/>
    <property type="match status" value="1"/>
</dbReference>
<dbReference type="SUPFAM" id="SSF54001">
    <property type="entry name" value="Cysteine proteinases"/>
    <property type="match status" value="1"/>
</dbReference>
<dbReference type="PROSITE" id="PS00640">
    <property type="entry name" value="THIOL_PROTEASE_ASN"/>
    <property type="match status" value="1"/>
</dbReference>
<dbReference type="PROSITE" id="PS00139">
    <property type="entry name" value="THIOL_PROTEASE_CYS"/>
    <property type="match status" value="1"/>
</dbReference>
<dbReference type="PROSITE" id="PS00639">
    <property type="entry name" value="THIOL_PROTEASE_HIS"/>
    <property type="match status" value="1"/>
</dbReference>
<protein>
    <recommendedName>
        <fullName>Cathepsin S</fullName>
        <ecNumber>3.4.22.27</ecNumber>
    </recommendedName>
</protein>
<keyword id="KW-0968">Cytoplasmic vesicle</keyword>
<keyword id="KW-1015">Disulfide bond</keyword>
<keyword id="KW-0325">Glycoprotein</keyword>
<keyword id="KW-0378">Hydrolase</keyword>
<keyword id="KW-0458">Lysosome</keyword>
<keyword id="KW-0645">Protease</keyword>
<keyword id="KW-1185">Reference proteome</keyword>
<keyword id="KW-0964">Secreted</keyword>
<keyword id="KW-0732">Signal</keyword>
<keyword id="KW-0788">Thiol protease</keyword>
<keyword id="KW-0865">Zymogen</keyword>
<sequence length="330" mass="36833">MAVLGAPGVLCDNGATAERPTLDHHWDLWKKTRMRRNTDQNEEDVRRLIWEKNLKFIMLHNLEHSMGMHSYSVGMNHMGDMTPEEVIGYMGSLRIPRPWNRSGTLKSSSNQTLPDSVDWREKGCVTNVKYQGSCGSCWAFSAEGALEGQLKLKTGKLVSLSAQNLVDCSTEEKYGNKGCGGGFMTEAFQYIIDTSIDSEASYPYKAMDEKCLYDPKNRAATCSRYIELPFGDEEALKEAVATKGPVSVGIDDASHSSFFLYQSGVYDDPSCTENMNHGVLVVGYGTLDGKDYWLVKNSWGLHFGDQGYIRMARNNKNHCGIASYCSYPEI</sequence>
<name>CATS_RAT</name>
<gene>
    <name type="primary">Ctss</name>
</gene>
<reference key="1">
    <citation type="journal article" date="1992" name="J. Biol. Chem.">
        <title>Sequence analysis, tissue distribution, and expression of rat cathepsin S.</title>
        <authorList>
            <person name="Petanceska S."/>
            <person name="Devi L."/>
        </authorList>
    </citation>
    <scope>NUCLEOTIDE SEQUENCE [MRNA]</scope>
    <source>
        <tissue>Brain</tissue>
    </source>
</reference>
<comment type="function">
    <text evidence="2">Thiol protease. Key protease responsible for the removal of the invariant chain from MHC class II molecules and MHC class II antigen presentation. The bond-specificity of this proteinase is in part similar to the specificities of cathepsin L.</text>
</comment>
<comment type="catalytic activity">
    <reaction>
        <text>Similar to cathepsin L, but with much less activity on Z-Phe-Arg-|-NHMec, and more activity on the Z-Val-Val-Arg-|-Xaa compound.</text>
        <dbReference type="EC" id="3.4.22.27"/>
    </reaction>
</comment>
<comment type="subunit">
    <text>Monomer.</text>
</comment>
<comment type="subcellular location">
    <subcellularLocation>
        <location evidence="2">Lysosome</location>
    </subcellularLocation>
    <subcellularLocation>
        <location evidence="2">Secreted</location>
    </subcellularLocation>
    <subcellularLocation>
        <location evidence="2">Cytoplasmic vesicle</location>
        <location evidence="2">Phagosome</location>
    </subcellularLocation>
</comment>
<comment type="tissue specificity">
    <text>Highest levels occur in the ileum followed by spleen, brain, thyroid, ovary and uterus. Low levels are found in the liver, kidney, jejunum and lung with lowest levels in the heart.</text>
</comment>
<comment type="induction">
    <text>By thyroid-stimulating hormone.</text>
</comment>
<comment type="similarity">
    <text evidence="4 5 6">Belongs to the peptidase C1 family.</text>
</comment>
<organism>
    <name type="scientific">Rattus norvegicus</name>
    <name type="common">Rat</name>
    <dbReference type="NCBI Taxonomy" id="10116"/>
    <lineage>
        <taxon>Eukaryota</taxon>
        <taxon>Metazoa</taxon>
        <taxon>Chordata</taxon>
        <taxon>Craniata</taxon>
        <taxon>Vertebrata</taxon>
        <taxon>Euteleostomi</taxon>
        <taxon>Mammalia</taxon>
        <taxon>Eutheria</taxon>
        <taxon>Euarchontoglires</taxon>
        <taxon>Glires</taxon>
        <taxon>Rodentia</taxon>
        <taxon>Myomorpha</taxon>
        <taxon>Muroidea</taxon>
        <taxon>Muridae</taxon>
        <taxon>Murinae</taxon>
        <taxon>Rattus</taxon>
    </lineage>
</organism>
<proteinExistence type="evidence at transcript level"/>
<accession>Q02765</accession>